<evidence type="ECO:0000255" key="1">
    <source>
        <dbReference type="HAMAP-Rule" id="MF_00758"/>
    </source>
</evidence>
<proteinExistence type="inferred from homology"/>
<gene>
    <name type="ordered locus">Sde_3637</name>
</gene>
<dbReference type="EMBL" id="CP000282">
    <property type="protein sequence ID" value="ABD82892.1"/>
    <property type="molecule type" value="Genomic_DNA"/>
</dbReference>
<dbReference type="RefSeq" id="WP_011470107.1">
    <property type="nucleotide sequence ID" value="NC_007912.1"/>
</dbReference>
<dbReference type="SMR" id="Q21EI7"/>
<dbReference type="STRING" id="203122.Sde_3637"/>
<dbReference type="GeneID" id="98615246"/>
<dbReference type="KEGG" id="sde:Sde_3637"/>
<dbReference type="eggNOG" id="COG1678">
    <property type="taxonomic scope" value="Bacteria"/>
</dbReference>
<dbReference type="HOGENOM" id="CLU_057596_1_0_6"/>
<dbReference type="OrthoDB" id="9807486at2"/>
<dbReference type="Proteomes" id="UP000001947">
    <property type="component" value="Chromosome"/>
</dbReference>
<dbReference type="GO" id="GO:0005829">
    <property type="term" value="C:cytosol"/>
    <property type="evidence" value="ECO:0007669"/>
    <property type="project" value="TreeGrafter"/>
</dbReference>
<dbReference type="Gene3D" id="3.40.1740.10">
    <property type="entry name" value="VC0467-like"/>
    <property type="match status" value="1"/>
</dbReference>
<dbReference type="HAMAP" id="MF_00758">
    <property type="entry name" value="UPF0301"/>
    <property type="match status" value="1"/>
</dbReference>
<dbReference type="InterPro" id="IPR003774">
    <property type="entry name" value="AlgH-like"/>
</dbReference>
<dbReference type="NCBIfam" id="NF001266">
    <property type="entry name" value="PRK00228.1-1"/>
    <property type="match status" value="1"/>
</dbReference>
<dbReference type="PANTHER" id="PTHR30327">
    <property type="entry name" value="UNCHARACTERIZED PROTEIN YQGE"/>
    <property type="match status" value="1"/>
</dbReference>
<dbReference type="PANTHER" id="PTHR30327:SF1">
    <property type="entry name" value="UPF0301 PROTEIN YQGE"/>
    <property type="match status" value="1"/>
</dbReference>
<dbReference type="Pfam" id="PF02622">
    <property type="entry name" value="DUF179"/>
    <property type="match status" value="1"/>
</dbReference>
<dbReference type="SUPFAM" id="SSF143456">
    <property type="entry name" value="VC0467-like"/>
    <property type="match status" value="1"/>
</dbReference>
<feature type="chain" id="PRO_0000258877" description="UPF0301 protein Sde_3637">
    <location>
        <begin position="1"/>
        <end position="203"/>
    </location>
</feature>
<comment type="similarity">
    <text evidence="1">Belongs to the UPF0301 (AlgH) family.</text>
</comment>
<sequence length="203" mass="21796">MATLDSNDKHDNHAPEAAGEFVSLRDHFLIAMPGLQDPIFSRSLTYICDHTAQGAMGIVVNQPMNLTLGDIFEQLELQDKAQQAGRAVLAGGPVNTERGFVLHRDSGAWESTMHIAPDVNLTASRDIVHAIANNTGPKSSLFALGYAGWSAGQLEEEISANSWLTIPADSSIIFDIPVEDRWAAAARQLGIDIHLMSATAGHA</sequence>
<keyword id="KW-1185">Reference proteome</keyword>
<protein>
    <recommendedName>
        <fullName evidence="1">UPF0301 protein Sde_3637</fullName>
    </recommendedName>
</protein>
<organism>
    <name type="scientific">Saccharophagus degradans (strain 2-40 / ATCC 43961 / DSM 17024)</name>
    <dbReference type="NCBI Taxonomy" id="203122"/>
    <lineage>
        <taxon>Bacteria</taxon>
        <taxon>Pseudomonadati</taxon>
        <taxon>Pseudomonadota</taxon>
        <taxon>Gammaproteobacteria</taxon>
        <taxon>Cellvibrionales</taxon>
        <taxon>Cellvibrionaceae</taxon>
        <taxon>Saccharophagus</taxon>
    </lineage>
</organism>
<reference key="1">
    <citation type="journal article" date="2008" name="PLoS Genet.">
        <title>Complete genome sequence of the complex carbohydrate-degrading marine bacterium, Saccharophagus degradans strain 2-40 T.</title>
        <authorList>
            <person name="Weiner R.M."/>
            <person name="Taylor L.E. II"/>
            <person name="Henrissat B."/>
            <person name="Hauser L."/>
            <person name="Land M."/>
            <person name="Coutinho P.M."/>
            <person name="Rancurel C."/>
            <person name="Saunders E.H."/>
            <person name="Longmire A.G."/>
            <person name="Zhang H."/>
            <person name="Bayer E.A."/>
            <person name="Gilbert H.J."/>
            <person name="Larimer F."/>
            <person name="Zhulin I.B."/>
            <person name="Ekborg N.A."/>
            <person name="Lamed R."/>
            <person name="Richardson P.M."/>
            <person name="Borovok I."/>
            <person name="Hutcheson S."/>
        </authorList>
    </citation>
    <scope>NUCLEOTIDE SEQUENCE [LARGE SCALE GENOMIC DNA]</scope>
    <source>
        <strain>2-40 / ATCC 43961 / DSM 17024</strain>
    </source>
</reference>
<name>Y3637_SACD2</name>
<accession>Q21EI7</accession>